<sequence length="231" mass="26550">MKVVIVTSVASLLDASIQFQKTAYRHHCNYLSMQVVKEIEEFGTINEKNLEFDTWTDVIQNDEIDALVFYRVKQIGISTGVLYKSMMRNRTKPISMYFVRDCLAFDGDPPSFRMTSCNINAYNRNKIKDLIILMNMKTCNKKIIGEFIIDNFGSVDALLSIINSNVTWVTSVINNSNGRGINIRVSNNKMLTITSFRRFVNKLKMYKTTKCASQLDNVCTEMNKMDIIDKK</sequence>
<evidence type="ECO:0000250" key="1">
    <source>
        <dbReference type="UniProtKB" id="Q80HX3"/>
    </source>
</evidence>
<evidence type="ECO:0000305" key="2"/>
<organism>
    <name type="scientific">Vaccinia virus (strain L-IVP)</name>
    <name type="common">VACV</name>
    <dbReference type="NCBI Taxonomy" id="31531"/>
    <lineage>
        <taxon>Viruses</taxon>
        <taxon>Varidnaviria</taxon>
        <taxon>Bamfordvirae</taxon>
        <taxon>Nucleocytoviricota</taxon>
        <taxon>Pokkesviricetes</taxon>
        <taxon>Chitovirales</taxon>
        <taxon>Poxviridae</taxon>
        <taxon>Chordopoxvirinae</taxon>
        <taxon>Orthopoxvirus</taxon>
        <taxon>Vaccinia virus</taxon>
    </lineage>
</organism>
<accession>P29892</accession>
<feature type="chain" id="PRO_0000099516" description="Protein OPG061">
    <location>
        <begin position="1"/>
        <end position="231"/>
    </location>
</feature>
<gene>
    <name type="primary">OPG061</name>
    <name type="ORF">F1</name>
</gene>
<comment type="subcellular location">
    <subcellularLocation>
        <location evidence="1">Host nucleus</location>
        <location evidence="1">Host nucleolus</location>
    </subcellularLocation>
</comment>
<comment type="induction">
    <text evidence="1">Expressed in the early phase of the viral replicative cycle.</text>
</comment>
<comment type="similarity">
    <text evidence="2">Belongs to the orthopoxvirus OPG058 family.</text>
</comment>
<keyword id="KW-0244">Early protein</keyword>
<keyword id="KW-1048">Host nucleus</keyword>
<proteinExistence type="inferred from homology"/>
<organismHost>
    <name type="scientific">Homo sapiens</name>
    <name type="common">Human</name>
    <dbReference type="NCBI Taxonomy" id="9606"/>
</organismHost>
<reference key="1">
    <citation type="journal article" date="1988" name="Biotekhnologiya">
        <title>Structural-functional organization of segment of vaccinia virus genome.</title>
        <authorList>
            <person name="Mikryukov N.N."/>
            <person name="Chizhikov V.E."/>
            <person name="Prikhod'Ko G.G."/>
            <person name="Urmmanov I.M."/>
            <person name="Serpinskii O.I."/>
            <person name="Blinov V.M."/>
            <person name="Nikulin A.E."/>
            <person name="Vasilenko S.K."/>
        </authorList>
    </citation>
    <scope>NUCLEOTIDE SEQUENCE [GENOMIC DNA]</scope>
</reference>
<dbReference type="EMBL" id="M57977">
    <property type="protein sequence ID" value="AAA48280.1"/>
    <property type="molecule type" value="Genomic_DNA"/>
</dbReference>
<dbReference type="SMR" id="P29892"/>
<dbReference type="GO" id="GO:0044196">
    <property type="term" value="C:host cell nucleolus"/>
    <property type="evidence" value="ECO:0007669"/>
    <property type="project" value="UniProtKB-SubCell"/>
</dbReference>
<dbReference type="InterPro" id="IPR006798">
    <property type="entry name" value="Poxvirus_F16"/>
</dbReference>
<dbReference type="Pfam" id="PF04708">
    <property type="entry name" value="Pox_F16"/>
    <property type="match status" value="1"/>
</dbReference>
<dbReference type="PIRSF" id="PIRSF015792">
    <property type="entry name" value="VAC_F16L"/>
    <property type="match status" value="1"/>
</dbReference>
<name>PG061_VACCP</name>
<protein>
    <recommendedName>
        <fullName>Protein OPG061</fullName>
    </recommendedName>
    <alternativeName>
        <fullName>Protein F1</fullName>
    </alternativeName>
    <alternativeName>
        <fullName>Protein F16</fullName>
    </alternativeName>
</protein>